<dbReference type="EC" id="2.1.1.273" evidence="5"/>
<dbReference type="EC" id="2.1.1.274" evidence="5"/>
<dbReference type="EMBL" id="AY233465">
    <property type="protein sequence ID" value="AAO45012.1"/>
    <property type="molecule type" value="mRNA"/>
</dbReference>
<dbReference type="SMR" id="Q84UB5"/>
<dbReference type="GO" id="GO:0046872">
    <property type="term" value="F:metal ion binding"/>
    <property type="evidence" value="ECO:0007669"/>
    <property type="project" value="UniProtKB-KW"/>
</dbReference>
<dbReference type="GO" id="GO:0008168">
    <property type="term" value="F:methyltransferase activity"/>
    <property type="evidence" value="ECO:0000314"/>
    <property type="project" value="UniProtKB"/>
</dbReference>
<dbReference type="GO" id="GO:0032259">
    <property type="term" value="P:methylation"/>
    <property type="evidence" value="ECO:0007669"/>
    <property type="project" value="UniProtKB-KW"/>
</dbReference>
<dbReference type="GO" id="GO:0009856">
    <property type="term" value="P:pollination"/>
    <property type="evidence" value="ECO:0000314"/>
    <property type="project" value="UniProtKB"/>
</dbReference>
<dbReference type="GO" id="GO:0009723">
    <property type="term" value="P:response to ethylene"/>
    <property type="evidence" value="ECO:0000270"/>
    <property type="project" value="UniProtKB"/>
</dbReference>
<dbReference type="Gene3D" id="1.10.1200.270">
    <property type="entry name" value="Methyltransferase, alpha-helical capping domain"/>
    <property type="match status" value="1"/>
</dbReference>
<dbReference type="Gene3D" id="3.40.50.150">
    <property type="entry name" value="Vaccinia Virus protein VP39"/>
    <property type="match status" value="1"/>
</dbReference>
<dbReference type="InterPro" id="IPR005299">
    <property type="entry name" value="MeTrfase_7"/>
</dbReference>
<dbReference type="InterPro" id="IPR042086">
    <property type="entry name" value="MeTrfase_capping"/>
</dbReference>
<dbReference type="InterPro" id="IPR029063">
    <property type="entry name" value="SAM-dependent_MTases_sf"/>
</dbReference>
<dbReference type="PANTHER" id="PTHR31009">
    <property type="entry name" value="S-ADENOSYL-L-METHIONINE:CARBOXYL METHYLTRANSFERASE FAMILY PROTEIN"/>
    <property type="match status" value="1"/>
</dbReference>
<dbReference type="Pfam" id="PF03492">
    <property type="entry name" value="Methyltransf_7"/>
    <property type="match status" value="1"/>
</dbReference>
<dbReference type="SUPFAM" id="SSF53335">
    <property type="entry name" value="S-adenosyl-L-methionine-dependent methyltransferases"/>
    <property type="match status" value="1"/>
</dbReference>
<accession>Q84UB5</accession>
<protein>
    <recommendedName>
        <fullName evidence="7">S-adenosyl-L-methionine:benzoic acid/salicylic acid carboxyl methyltransferase 1</fullName>
        <shortName evidence="7">PhBSMT1</shortName>
        <ecNumber evidence="5">2.1.1.273</ecNumber>
        <ecNumber evidence="5">2.1.1.274</ecNumber>
    </recommendedName>
</protein>
<sequence>MEVVEVLHMNGGNGDSSYANNSLVQQKVILMTKPITEQAMIDLYSSLFPETLCIADLGCSLGANTFLVVSQLVKIVEKERKKHGFKSPEFYFHFNDLPGNDFNTLFQSLGAFQEDLRKHIGESFGPCFFSGVPGSFYTRLFPSKSLHFVYSSYSLMWLSQVPNGIENNKGNIYMARTSPLSVIKAYYKQYEIDFSNFLKYRSEELMKGGKMVLTLLGRESEDPTSKECCYIWELLAMALNKLVEEGLIKEEKVDAFNIPQYTPSPAEVKYIVEKEGSFTINRLETSRVHWNASNNEKNGGYNVSRCMRAVAEPLLVSHFDKELMDLVFHKYEEIVSDCMSKENTEFINVIISLTKIN</sequence>
<keyword id="KW-0460">Magnesium</keyword>
<keyword id="KW-0479">Metal-binding</keyword>
<keyword id="KW-0489">Methyltransferase</keyword>
<keyword id="KW-0949">S-adenosyl-L-methionine</keyword>
<keyword id="KW-0808">Transferase</keyword>
<organism>
    <name type="scientific">Petunia hybrida</name>
    <name type="common">Petunia</name>
    <dbReference type="NCBI Taxonomy" id="4102"/>
    <lineage>
        <taxon>Eukaryota</taxon>
        <taxon>Viridiplantae</taxon>
        <taxon>Streptophyta</taxon>
        <taxon>Embryophyta</taxon>
        <taxon>Tracheophyta</taxon>
        <taxon>Spermatophyta</taxon>
        <taxon>Magnoliopsida</taxon>
        <taxon>eudicotyledons</taxon>
        <taxon>Gunneridae</taxon>
        <taxon>Pentapetalae</taxon>
        <taxon>asterids</taxon>
        <taxon>lamiids</taxon>
        <taxon>Solanales</taxon>
        <taxon>Solanaceae</taxon>
        <taxon>Petunioideae</taxon>
        <taxon>Petunia</taxon>
    </lineage>
</organism>
<gene>
    <name evidence="7" type="primary">BSMT1</name>
</gene>
<reference key="1">
    <citation type="journal article" date="2003" name="Plant Cell">
        <title>Regulation of methylbenzoate emission after pollination in snapdragon and petunia flowers.</title>
        <authorList>
            <person name="Negre F."/>
            <person name="Kish C.M."/>
            <person name="Boatright J."/>
            <person name="Underwood B."/>
            <person name="Shibuya K."/>
            <person name="Wagner C."/>
            <person name="Clark D.G."/>
            <person name="Dudareva N."/>
        </authorList>
    </citation>
    <scope>NUCLEOTIDE SEQUENCE [MRNA]</scope>
    <scope>FUNCTION</scope>
    <scope>CATALYTIC ACTIVITY</scope>
    <scope>BIOPHYSICOCHEMICAL PROPERTIES</scope>
    <scope>TISSUE SPECIFICITY</scope>
    <scope>REPRESSION BY POLLINATION AND ETHYLENE</scope>
    <scope>PATHWAY</scope>
    <source>
        <strain>cv. Mitchell</strain>
    </source>
</reference>
<reference key="2">
    <citation type="journal article" date="2012" name="Plant Cell">
        <title>The R2R3-MYB-like regulatory factor EOBI, acting downstream of EOBII, regulates scent production by activating ODO1 and structural scent-related genes in petunia.</title>
        <authorList>
            <person name="Spitzer-Rimon B."/>
            <person name="Farhi M."/>
            <person name="Albo B."/>
            <person name="Cna'ani A."/>
            <person name="Ben Zvi M.M."/>
            <person name="Masci T."/>
            <person name="Edelbaum O."/>
            <person name="Yu Y."/>
            <person name="Shklarman E."/>
            <person name="Ovadis M."/>
            <person name="Vainstein A."/>
        </authorList>
    </citation>
    <scope>INDUCTION BY EOBI</scope>
    <source>
        <strain>cv. W115</strain>
    </source>
</reference>
<comment type="function">
    <text evidence="5">Converts benzoic acid into the volatile ester methyl benzoates (PubMed:14630969). This scent, mostly produced in a rhythmical, diurnal manner, attracts the pollinators (PubMed:14630969).</text>
</comment>
<comment type="catalytic activity">
    <reaction evidence="5">
        <text>benzoate + S-adenosyl-L-methionine = methyl benzoate + S-adenosyl-L-homocysteine</text>
        <dbReference type="Rhea" id="RHEA:36099"/>
        <dbReference type="ChEBI" id="CHEBI:16150"/>
        <dbReference type="ChEBI" id="CHEBI:57856"/>
        <dbReference type="ChEBI" id="CHEBI:59789"/>
        <dbReference type="ChEBI" id="CHEBI:72775"/>
        <dbReference type="EC" id="2.1.1.273"/>
    </reaction>
    <physiologicalReaction direction="left-to-right" evidence="5">
        <dbReference type="Rhea" id="RHEA:36100"/>
    </physiologicalReaction>
</comment>
<comment type="catalytic activity">
    <reaction evidence="5">
        <text>salicylate + S-adenosyl-L-methionine = methyl salicylate + S-adenosyl-L-homocysteine</text>
        <dbReference type="Rhea" id="RHEA:36095"/>
        <dbReference type="ChEBI" id="CHEBI:30762"/>
        <dbReference type="ChEBI" id="CHEBI:31832"/>
        <dbReference type="ChEBI" id="CHEBI:57856"/>
        <dbReference type="ChEBI" id="CHEBI:59789"/>
        <dbReference type="EC" id="2.1.1.274"/>
    </reaction>
    <physiologicalReaction direction="left-to-right" evidence="5">
        <dbReference type="Rhea" id="RHEA:36096"/>
    </physiologicalReaction>
</comment>
<comment type="biophysicochemical properties">
    <kinetics>
        <KM evidence="5">1.93 uM for S-adenosyl-L-methionine (in the presence of salicylic acid)</KM>
        <KM evidence="5">15.78 uM for S-adenosyl-L-methionine (in the presence of benzoic acid)</KM>
        <KM evidence="5">51.55 uM for salicylic acid</KM>
        <KM evidence="5">1273.2 uM for benzoic acid</KM>
        <text evidence="5">kcat is 0.0145 sec(-1) with S-adenosyl-L-methionine (in the presence of salicylic acid) (PubMed:14630969). kcat is 0.0075 sec(-1) with S-adenosyl-L-methionine (in the presence of benzoic acid) (PubMed:14630969). kcat is 0.012 sec(-1) with salicylic acid as substrate (PubMed:14630969). kcat is 0.0039 sec(-1) with benzoic acid as substrate (PubMed:14630969).</text>
    </kinetics>
    <phDependence>
        <text evidence="5">Optimum pH is 7-8 with salicylic acid as substrate (PubMed:14630969). Optimum pH is 7.5 with benzoic acid as substrate (PubMed:14630969).</text>
    </phDependence>
</comment>
<comment type="pathway">
    <text evidence="5">Aromatic compound metabolism.</text>
</comment>
<comment type="tissue specificity">
    <text evidence="5">Predominantly expressed in petal limbs and tubes of corollas.</text>
</comment>
<comment type="induction">
    <text evidence="5 6">Triggered by EOBI in flowers (PubMed:23275577). Fades out in flower petals after pollination, thus resulting in a decrease in methylbenzoate emission (PubMed:14630969). Strongly repressed by ethylene (PubMed:14630969).</text>
</comment>
<comment type="similarity">
    <text evidence="8">Belongs to the methyltransferase superfamily. Type-7 methyltransferase family.</text>
</comment>
<feature type="chain" id="PRO_0000451511" description="S-adenosyl-L-methionine:benzoic acid/salicylic acid carboxyl methyltransferase 1">
    <location>
        <begin position="1"/>
        <end position="357"/>
    </location>
</feature>
<feature type="binding site" evidence="2">
    <location>
        <position position="18"/>
    </location>
    <ligand>
        <name>S-adenosyl-L-homocysteine</name>
        <dbReference type="ChEBI" id="CHEBI:57856"/>
    </ligand>
</feature>
<feature type="binding site" evidence="2">
    <location>
        <position position="25"/>
    </location>
    <ligand>
        <name>benzoate</name>
        <dbReference type="ChEBI" id="CHEBI:16150"/>
    </ligand>
</feature>
<feature type="binding site" evidence="2">
    <location>
        <position position="59"/>
    </location>
    <ligand>
        <name>S-adenosyl-L-homocysteine</name>
        <dbReference type="ChEBI" id="CHEBI:57856"/>
    </ligand>
</feature>
<feature type="binding site" evidence="2">
    <location>
        <position position="64"/>
    </location>
    <ligand>
        <name>S-adenosyl-L-homocysteine</name>
        <dbReference type="ChEBI" id="CHEBI:57856"/>
    </ligand>
</feature>
<feature type="binding site" evidence="2">
    <location>
        <position position="96"/>
    </location>
    <ligand>
        <name>S-adenosyl-L-homocysteine</name>
        <dbReference type="ChEBI" id="CHEBI:57856"/>
    </ligand>
</feature>
<feature type="binding site" evidence="1">
    <location>
        <position position="97"/>
    </location>
    <ligand>
        <name>S-adenosyl-L-homocysteine</name>
        <dbReference type="ChEBI" id="CHEBI:57856"/>
    </ligand>
</feature>
<feature type="binding site" evidence="2">
    <location>
        <position position="135"/>
    </location>
    <ligand>
        <name>S-adenosyl-L-homocysteine</name>
        <dbReference type="ChEBI" id="CHEBI:57856"/>
    </ligand>
</feature>
<feature type="binding site" evidence="2">
    <location>
        <position position="136"/>
    </location>
    <ligand>
        <name>S-adenosyl-L-homocysteine</name>
        <dbReference type="ChEBI" id="CHEBI:57856"/>
    </ligand>
</feature>
<feature type="binding site" evidence="2">
    <location>
        <position position="157"/>
    </location>
    <ligand>
        <name>benzoate</name>
        <dbReference type="ChEBI" id="CHEBI:16150"/>
    </ligand>
</feature>
<feature type="binding site" evidence="3">
    <location>
        <position position="168"/>
    </location>
    <ligand>
        <name>Mg(2+)</name>
        <dbReference type="ChEBI" id="CHEBI:18420"/>
    </ligand>
</feature>
<feature type="binding site" evidence="3">
    <location>
        <position position="254"/>
    </location>
    <ligand>
        <name>Mg(2+)</name>
        <dbReference type="ChEBI" id="CHEBI:18420"/>
    </ligand>
</feature>
<feature type="binding site" evidence="3">
    <location>
        <position position="256"/>
    </location>
    <ligand>
        <name>Mg(2+)</name>
        <dbReference type="ChEBI" id="CHEBI:18420"/>
    </ligand>
</feature>
<feature type="binding site" evidence="3">
    <location>
        <position position="257"/>
    </location>
    <ligand>
        <name>Mg(2+)</name>
        <dbReference type="ChEBI" id="CHEBI:18420"/>
    </ligand>
</feature>
<feature type="binding site" evidence="2">
    <location>
        <position position="260"/>
    </location>
    <ligand>
        <name>benzoate</name>
        <dbReference type="ChEBI" id="CHEBI:16150"/>
    </ligand>
</feature>
<feature type="site" description="Involved in substrate discrimination" evidence="4">
    <location>
        <position position="150"/>
    </location>
</feature>
<proteinExistence type="evidence at protein level"/>
<name>BSMT1_PETHY</name>
<evidence type="ECO:0000250" key="1">
    <source>
        <dbReference type="UniProtKB" id="A0A6C0WW36"/>
    </source>
</evidence>
<evidence type="ECO:0000250" key="2">
    <source>
        <dbReference type="UniProtKB" id="B2KPR3"/>
    </source>
</evidence>
<evidence type="ECO:0000250" key="3">
    <source>
        <dbReference type="UniProtKB" id="Q9FLN8"/>
    </source>
</evidence>
<evidence type="ECO:0000250" key="4">
    <source>
        <dbReference type="UniProtKB" id="Q9FZN8"/>
    </source>
</evidence>
<evidence type="ECO:0000269" key="5">
    <source>
    </source>
</evidence>
<evidence type="ECO:0000269" key="6">
    <source>
    </source>
</evidence>
<evidence type="ECO:0000303" key="7">
    <source>
    </source>
</evidence>
<evidence type="ECO:0000305" key="8"/>